<proteinExistence type="evidence at transcript level"/>
<reference key="1">
    <citation type="journal article" date="2000" name="Nature">
        <title>Sequence and analysis of chromosome 3 of the plant Arabidopsis thaliana.</title>
        <authorList>
            <person name="Salanoubat M."/>
            <person name="Lemcke K."/>
            <person name="Rieger M."/>
            <person name="Ansorge W."/>
            <person name="Unseld M."/>
            <person name="Fartmann B."/>
            <person name="Valle G."/>
            <person name="Bloecker H."/>
            <person name="Perez-Alonso M."/>
            <person name="Obermaier B."/>
            <person name="Delseny M."/>
            <person name="Boutry M."/>
            <person name="Grivell L.A."/>
            <person name="Mache R."/>
            <person name="Puigdomenech P."/>
            <person name="De Simone V."/>
            <person name="Choisne N."/>
            <person name="Artiguenave F."/>
            <person name="Robert C."/>
            <person name="Brottier P."/>
            <person name="Wincker P."/>
            <person name="Cattolico L."/>
            <person name="Weissenbach J."/>
            <person name="Saurin W."/>
            <person name="Quetier F."/>
            <person name="Schaefer M."/>
            <person name="Mueller-Auer S."/>
            <person name="Gabel C."/>
            <person name="Fuchs M."/>
            <person name="Benes V."/>
            <person name="Wurmbach E."/>
            <person name="Drzonek H."/>
            <person name="Erfle H."/>
            <person name="Jordan N."/>
            <person name="Bangert S."/>
            <person name="Wiedelmann R."/>
            <person name="Kranz H."/>
            <person name="Voss H."/>
            <person name="Holland R."/>
            <person name="Brandt P."/>
            <person name="Nyakatura G."/>
            <person name="Vezzi A."/>
            <person name="D'Angelo M."/>
            <person name="Pallavicini A."/>
            <person name="Toppo S."/>
            <person name="Simionati B."/>
            <person name="Conrad A."/>
            <person name="Hornischer K."/>
            <person name="Kauer G."/>
            <person name="Loehnert T.-H."/>
            <person name="Nordsiek G."/>
            <person name="Reichelt J."/>
            <person name="Scharfe M."/>
            <person name="Schoen O."/>
            <person name="Bargues M."/>
            <person name="Terol J."/>
            <person name="Climent J."/>
            <person name="Navarro P."/>
            <person name="Collado C."/>
            <person name="Perez-Perez A."/>
            <person name="Ottenwaelder B."/>
            <person name="Duchemin D."/>
            <person name="Cooke R."/>
            <person name="Laudie M."/>
            <person name="Berger-Llauro C."/>
            <person name="Purnelle B."/>
            <person name="Masuy D."/>
            <person name="de Haan M."/>
            <person name="Maarse A.C."/>
            <person name="Alcaraz J.-P."/>
            <person name="Cottet A."/>
            <person name="Casacuberta E."/>
            <person name="Monfort A."/>
            <person name="Argiriou A."/>
            <person name="Flores M."/>
            <person name="Liguori R."/>
            <person name="Vitale D."/>
            <person name="Mannhaupt G."/>
            <person name="Haase D."/>
            <person name="Schoof H."/>
            <person name="Rudd S."/>
            <person name="Zaccaria P."/>
            <person name="Mewes H.-W."/>
            <person name="Mayer K.F.X."/>
            <person name="Kaul S."/>
            <person name="Town C.D."/>
            <person name="Koo H.L."/>
            <person name="Tallon L.J."/>
            <person name="Jenkins J."/>
            <person name="Rooney T."/>
            <person name="Rizzo M."/>
            <person name="Walts A."/>
            <person name="Utterback T."/>
            <person name="Fujii C.Y."/>
            <person name="Shea T.P."/>
            <person name="Creasy T.H."/>
            <person name="Haas B."/>
            <person name="Maiti R."/>
            <person name="Wu D."/>
            <person name="Peterson J."/>
            <person name="Van Aken S."/>
            <person name="Pai G."/>
            <person name="Militscher J."/>
            <person name="Sellers P."/>
            <person name="Gill J.E."/>
            <person name="Feldblyum T.V."/>
            <person name="Preuss D."/>
            <person name="Lin X."/>
            <person name="Nierman W.C."/>
            <person name="Salzberg S.L."/>
            <person name="White O."/>
            <person name="Venter J.C."/>
            <person name="Fraser C.M."/>
            <person name="Kaneko T."/>
            <person name="Nakamura Y."/>
            <person name="Sato S."/>
            <person name="Kato T."/>
            <person name="Asamizu E."/>
            <person name="Sasamoto S."/>
            <person name="Kimura T."/>
            <person name="Idesawa K."/>
            <person name="Kawashima K."/>
            <person name="Kishida Y."/>
            <person name="Kiyokawa C."/>
            <person name="Kohara M."/>
            <person name="Matsumoto M."/>
            <person name="Matsuno A."/>
            <person name="Muraki A."/>
            <person name="Nakayama S."/>
            <person name="Nakazaki N."/>
            <person name="Shinpo S."/>
            <person name="Takeuchi C."/>
            <person name="Wada T."/>
            <person name="Watanabe A."/>
            <person name="Yamada M."/>
            <person name="Yasuda M."/>
            <person name="Tabata S."/>
        </authorList>
    </citation>
    <scope>NUCLEOTIDE SEQUENCE [LARGE SCALE GENOMIC DNA]</scope>
    <source>
        <strain>cv. Columbia</strain>
    </source>
</reference>
<reference key="2">
    <citation type="journal article" date="2017" name="Plant J.">
        <title>Araport11: a complete reannotation of the Arabidopsis thaliana reference genome.</title>
        <authorList>
            <person name="Cheng C.Y."/>
            <person name="Krishnakumar V."/>
            <person name="Chan A.P."/>
            <person name="Thibaud-Nissen F."/>
            <person name="Schobel S."/>
            <person name="Town C.D."/>
        </authorList>
    </citation>
    <scope>GENOME REANNOTATION</scope>
    <source>
        <strain>cv. Columbia</strain>
    </source>
</reference>
<reference key="3">
    <citation type="journal article" date="2003" name="Science">
        <title>Empirical analysis of transcriptional activity in the Arabidopsis genome.</title>
        <authorList>
            <person name="Yamada K."/>
            <person name="Lim J."/>
            <person name="Dale J.M."/>
            <person name="Chen H."/>
            <person name="Shinn P."/>
            <person name="Palm C.J."/>
            <person name="Southwick A.M."/>
            <person name="Wu H.C."/>
            <person name="Kim C.J."/>
            <person name="Nguyen M."/>
            <person name="Pham P.K."/>
            <person name="Cheuk R.F."/>
            <person name="Karlin-Newmann G."/>
            <person name="Liu S.X."/>
            <person name="Lam B."/>
            <person name="Sakano H."/>
            <person name="Wu T."/>
            <person name="Yu G."/>
            <person name="Miranda M."/>
            <person name="Quach H.L."/>
            <person name="Tripp M."/>
            <person name="Chang C.H."/>
            <person name="Lee J.M."/>
            <person name="Toriumi M.J."/>
            <person name="Chan M.M."/>
            <person name="Tang C.C."/>
            <person name="Onodera C.S."/>
            <person name="Deng J.M."/>
            <person name="Akiyama K."/>
            <person name="Ansari Y."/>
            <person name="Arakawa T."/>
            <person name="Banh J."/>
            <person name="Banno F."/>
            <person name="Bowser L."/>
            <person name="Brooks S.Y."/>
            <person name="Carninci P."/>
            <person name="Chao Q."/>
            <person name="Choy N."/>
            <person name="Enju A."/>
            <person name="Goldsmith A.D."/>
            <person name="Gurjal M."/>
            <person name="Hansen N.F."/>
            <person name="Hayashizaki Y."/>
            <person name="Johnson-Hopson C."/>
            <person name="Hsuan V.W."/>
            <person name="Iida K."/>
            <person name="Karnes M."/>
            <person name="Khan S."/>
            <person name="Koesema E."/>
            <person name="Ishida J."/>
            <person name="Jiang P.X."/>
            <person name="Jones T."/>
            <person name="Kawai J."/>
            <person name="Kamiya A."/>
            <person name="Meyers C."/>
            <person name="Nakajima M."/>
            <person name="Narusaka M."/>
            <person name="Seki M."/>
            <person name="Sakurai T."/>
            <person name="Satou M."/>
            <person name="Tamse R."/>
            <person name="Vaysberg M."/>
            <person name="Wallender E.K."/>
            <person name="Wong C."/>
            <person name="Yamamura Y."/>
            <person name="Yuan S."/>
            <person name="Shinozaki K."/>
            <person name="Davis R.W."/>
            <person name="Theologis A."/>
            <person name="Ecker J.R."/>
        </authorList>
    </citation>
    <scope>NUCLEOTIDE SEQUENCE [LARGE SCALE MRNA]</scope>
    <source>
        <strain>cv. Columbia</strain>
    </source>
</reference>
<reference key="4">
    <citation type="thesis" date="2000" institute="University of Cambridge" country="United Kingdom">
        <authorList>
            <person name="Mahon P."/>
        </authorList>
    </citation>
    <scope>NUCLEOTIDE SEQUENCE [MRNA] OF 25-376</scope>
</reference>
<reference key="5">
    <citation type="journal article" date="2000" name="Biochem. Biophys. Res. Commun.">
        <title>Animal and plant members of a gene family with similarity to alkaloid-synthesizing enzymes.</title>
        <authorList>
            <person name="Fabbri M."/>
            <person name="Delp G."/>
            <person name="Schmidt O."/>
            <person name="Theopold U."/>
        </authorList>
    </citation>
    <scope>GENE FAMILY</scope>
    <scope>NOMENCLATURE</scope>
</reference>
<reference key="6">
    <citation type="journal article" date="2009" name="Plant Biol.">
        <title>Phylogenetic and transcriptional analysis of a strictosidine synthase-like gene family in Arabidopsis thaliana reveals involvement in plant defence responses.</title>
        <authorList>
            <person name="Sohani M.M."/>
            <person name="Schenk P.M."/>
            <person name="Schultz C.J."/>
            <person name="Schmidt O."/>
        </authorList>
    </citation>
    <scope>GENE FAMILY</scope>
    <source>
        <strain>cv. Columbia</strain>
    </source>
</reference>
<gene>
    <name evidence="4" type="primary">SSL8</name>
    <name evidence="5" type="synonym">SS5</name>
    <name evidence="7" type="ordered locus">At3g57010</name>
    <name evidence="8" type="ORF">F24I3.90</name>
</gene>
<comment type="subcellular location">
    <subcellularLocation>
        <location evidence="1">Vacuole</location>
    </subcellularLocation>
</comment>
<comment type="similarity">
    <text evidence="6">Belongs to the strictosidine synthase family.</text>
</comment>
<evidence type="ECO:0000250" key="1"/>
<evidence type="ECO:0000255" key="2"/>
<evidence type="ECO:0000255" key="3">
    <source>
        <dbReference type="PROSITE-ProRule" id="PRU00498"/>
    </source>
</evidence>
<evidence type="ECO:0000303" key="4">
    <source>
    </source>
</evidence>
<evidence type="ECO:0000303" key="5">
    <source>
    </source>
</evidence>
<evidence type="ECO:0000305" key="6"/>
<evidence type="ECO:0000312" key="7">
    <source>
        <dbReference type="Araport" id="AT3G57010"/>
    </source>
</evidence>
<evidence type="ECO:0000312" key="8">
    <source>
        <dbReference type="EMBL" id="CAB72171.1"/>
    </source>
</evidence>
<evidence type="ECO:0000312" key="9">
    <source>
        <dbReference type="Proteomes" id="UP000006548"/>
    </source>
</evidence>
<feature type="signal peptide" evidence="2">
    <location>
        <begin position="1"/>
        <end position="31"/>
    </location>
</feature>
<feature type="chain" id="PRO_0000431595" description="Protein STRICTOSIDINE SYNTHASE-LIKE 8" evidence="2">
    <location>
        <begin position="32"/>
        <end position="376"/>
    </location>
</feature>
<feature type="glycosylation site" description="N-linked (GlcNAc...) asparagine" evidence="3">
    <location>
        <position position="98"/>
    </location>
</feature>
<feature type="glycosylation site" description="N-linked (GlcNAc...) asparagine" evidence="3">
    <location>
        <position position="172"/>
    </location>
</feature>
<feature type="glycosylation site" description="N-linked (GlcNAc...) asparagine" evidence="3">
    <location>
        <position position="224"/>
    </location>
</feature>
<feature type="sequence conflict" description="In Ref. 3; AAK43996." evidence="6" ref="3">
    <original>A</original>
    <variation>G</variation>
    <location>
        <position position="142"/>
    </location>
</feature>
<feature type="sequence conflict" description="In Ref. 4; CAB69786." evidence="6" ref="4">
    <original>I</original>
    <variation>T</variation>
    <location>
        <position position="237"/>
    </location>
</feature>
<organism evidence="9">
    <name type="scientific">Arabidopsis thaliana</name>
    <name type="common">Mouse-ear cress</name>
    <dbReference type="NCBI Taxonomy" id="3702"/>
    <lineage>
        <taxon>Eukaryota</taxon>
        <taxon>Viridiplantae</taxon>
        <taxon>Streptophyta</taxon>
        <taxon>Embryophyta</taxon>
        <taxon>Tracheophyta</taxon>
        <taxon>Spermatophyta</taxon>
        <taxon>Magnoliopsida</taxon>
        <taxon>eudicotyledons</taxon>
        <taxon>Gunneridae</taxon>
        <taxon>Pentapetalae</taxon>
        <taxon>rosids</taxon>
        <taxon>malvids</taxon>
        <taxon>Brassicales</taxon>
        <taxon>Brassicaceae</taxon>
        <taxon>Camelineae</taxon>
        <taxon>Arabidopsis</taxon>
    </lineage>
</organism>
<sequence length="376" mass="41980">MPISRRVLTPITAAPVILAVLCFFFWSSIIGPDNLKGTKHVLQDAKTIPLPVDGPESLEFDPQGEGPYVGVTDGRILKWRGEELGWVDFAYTSPHRDNCSSHEVVPSCGRPLGLSFERKTGDLYICDGYFGVMKVGPEGGLAELVVDEAEGRKVMFANQGDIDEEEDIFYFNDSSDTYHFRDVFYVSLSGTKVGRVIRYDMKKKEAKVIMDKLRLPNGLALSKNGSFVVTCESSTNICHRIWVKGPKSGTNEVFATLPGSPDNIRRTPTGDFWVALHCKKNLFTRAVLIHTWVGRFFMNTMKMETVIHFMNGGKPHGIVVKLSGETGEILEILEDSEGKTVKYVSEAYETKDGKLWIGSVYWPAVWVLDTSVYDSI</sequence>
<name>SSL8_ARATH</name>
<dbReference type="EMBL" id="AL138655">
    <property type="protein sequence ID" value="CAB72171.1"/>
    <property type="molecule type" value="Genomic_DNA"/>
</dbReference>
<dbReference type="EMBL" id="CP002686">
    <property type="protein sequence ID" value="AEE79598.1"/>
    <property type="molecule type" value="Genomic_DNA"/>
</dbReference>
<dbReference type="EMBL" id="AF370181">
    <property type="protein sequence ID" value="AAK43996.1"/>
    <property type="molecule type" value="mRNA"/>
</dbReference>
<dbReference type="EMBL" id="AY142495">
    <property type="protein sequence ID" value="AAN13046.1"/>
    <property type="molecule type" value="mRNA"/>
</dbReference>
<dbReference type="EMBL" id="AJ271473">
    <property type="protein sequence ID" value="CAB69786.1"/>
    <property type="molecule type" value="mRNA"/>
</dbReference>
<dbReference type="PIR" id="T47761">
    <property type="entry name" value="T47761"/>
</dbReference>
<dbReference type="RefSeq" id="NP_191260.1">
    <property type="nucleotide sequence ID" value="NM_115560.4"/>
</dbReference>
<dbReference type="SMR" id="Q9M1J7"/>
<dbReference type="FunCoup" id="Q9M1J7">
    <property type="interactions" value="1400"/>
</dbReference>
<dbReference type="IntAct" id="Q9M1J7">
    <property type="interactions" value="1"/>
</dbReference>
<dbReference type="STRING" id="3702.Q9M1J7"/>
<dbReference type="GlyCosmos" id="Q9M1J7">
    <property type="glycosylation" value="3 sites, No reported glycans"/>
</dbReference>
<dbReference type="GlyGen" id="Q9M1J7">
    <property type="glycosylation" value="3 sites"/>
</dbReference>
<dbReference type="PaxDb" id="3702-AT3G57010.1"/>
<dbReference type="ProteomicsDB" id="245209"/>
<dbReference type="EnsemblPlants" id="AT3G57010.1">
    <property type="protein sequence ID" value="AT3G57010.1"/>
    <property type="gene ID" value="AT3G57010"/>
</dbReference>
<dbReference type="GeneID" id="824868"/>
<dbReference type="Gramene" id="AT3G57010.1">
    <property type="protein sequence ID" value="AT3G57010.1"/>
    <property type="gene ID" value="AT3G57010"/>
</dbReference>
<dbReference type="KEGG" id="ath:AT3G57010"/>
<dbReference type="Araport" id="AT3G57010"/>
<dbReference type="TAIR" id="AT3G57010"/>
<dbReference type="eggNOG" id="KOG1520">
    <property type="taxonomic scope" value="Eukaryota"/>
</dbReference>
<dbReference type="HOGENOM" id="CLU_023267_2_0_1"/>
<dbReference type="InParanoid" id="Q9M1J7"/>
<dbReference type="OMA" id="MPISRRV"/>
<dbReference type="OrthoDB" id="5307922at2759"/>
<dbReference type="PhylomeDB" id="Q9M1J7"/>
<dbReference type="BioCyc" id="ARA:AT3G57010-MONOMER"/>
<dbReference type="PRO" id="PR:Q9M1J7"/>
<dbReference type="Proteomes" id="UP000006548">
    <property type="component" value="Chromosome 3"/>
</dbReference>
<dbReference type="ExpressionAtlas" id="Q9M1J7">
    <property type="expression patterns" value="baseline and differential"/>
</dbReference>
<dbReference type="GO" id="GO:0005783">
    <property type="term" value="C:endoplasmic reticulum"/>
    <property type="evidence" value="ECO:0007005"/>
    <property type="project" value="TAIR"/>
</dbReference>
<dbReference type="GO" id="GO:0005773">
    <property type="term" value="C:vacuole"/>
    <property type="evidence" value="ECO:0007669"/>
    <property type="project" value="UniProtKB-SubCell"/>
</dbReference>
<dbReference type="FunFam" id="2.120.10.30:FF:000032">
    <property type="entry name" value="Protein STRICTOSIDINE SYNTHASE-LIKE 13"/>
    <property type="match status" value="1"/>
</dbReference>
<dbReference type="Gene3D" id="2.120.10.30">
    <property type="entry name" value="TolB, C-terminal domain"/>
    <property type="match status" value="1"/>
</dbReference>
<dbReference type="InterPro" id="IPR011042">
    <property type="entry name" value="6-blade_b-propeller_TolB-like"/>
</dbReference>
<dbReference type="InterPro" id="IPR018119">
    <property type="entry name" value="Strictosidine_synth_cons-reg"/>
</dbReference>
<dbReference type="PANTHER" id="PTHR10426:SF72">
    <property type="entry name" value="PROTEIN STRICTOSIDINE SYNTHASE-LIKE 8"/>
    <property type="match status" value="1"/>
</dbReference>
<dbReference type="PANTHER" id="PTHR10426">
    <property type="entry name" value="STRICTOSIDINE SYNTHASE-RELATED"/>
    <property type="match status" value="1"/>
</dbReference>
<dbReference type="Pfam" id="PF20067">
    <property type="entry name" value="SSL_N"/>
    <property type="match status" value="1"/>
</dbReference>
<dbReference type="Pfam" id="PF03088">
    <property type="entry name" value="Str_synth"/>
    <property type="match status" value="1"/>
</dbReference>
<dbReference type="SUPFAM" id="SSF63829">
    <property type="entry name" value="Calcium-dependent phosphotriesterase"/>
    <property type="match status" value="1"/>
</dbReference>
<protein>
    <recommendedName>
        <fullName evidence="4">Protein STRICTOSIDINE SYNTHASE-LIKE 8</fullName>
        <shortName evidence="4">AtSSL8</shortName>
    </recommendedName>
    <alternativeName>
        <fullName evidence="5">Strictosidine synthase 5</fullName>
        <shortName evidence="5">AtSS5</shortName>
    </alternativeName>
</protein>
<keyword id="KW-0325">Glycoprotein</keyword>
<keyword id="KW-1185">Reference proteome</keyword>
<keyword id="KW-0732">Signal</keyword>
<keyword id="KW-0926">Vacuole</keyword>
<accession>Q9M1J7</accession>
<accession>Q94K89</accession>
<accession>Q9M456</accession>